<feature type="initiator methionine" description="Removed" evidence="2">
    <location>
        <position position="1"/>
    </location>
</feature>
<feature type="chain" id="PRO_0000075039" description="F420-dependent methylenetetrahydromethanopterin dehydrogenase">
    <location>
        <begin position="2"/>
        <end position="283"/>
    </location>
</feature>
<feature type="region of interest" description="Disordered" evidence="1">
    <location>
        <begin position="255"/>
        <end position="283"/>
    </location>
</feature>
<feature type="sequence conflict" description="In Ref. 3; AA sequence." evidence="4" ref="3">
    <original>C</original>
    <variation>E</variation>
    <location>
        <position position="11"/>
    </location>
</feature>
<feature type="strand" evidence="5">
    <location>
        <begin position="4"/>
        <end position="10"/>
    </location>
</feature>
<feature type="helix" evidence="5">
    <location>
        <begin position="15"/>
        <end position="19"/>
    </location>
</feature>
<feature type="helix" evidence="5">
    <location>
        <begin position="22"/>
        <end position="24"/>
    </location>
</feature>
<feature type="strand" evidence="5">
    <location>
        <begin position="31"/>
        <end position="39"/>
    </location>
</feature>
<feature type="helix" evidence="5">
    <location>
        <begin position="46"/>
        <end position="63"/>
    </location>
</feature>
<feature type="strand" evidence="5">
    <location>
        <begin position="66"/>
        <end position="71"/>
    </location>
</feature>
<feature type="helix" evidence="5">
    <location>
        <begin position="78"/>
        <end position="88"/>
    </location>
</feature>
<feature type="strand" evidence="5">
    <location>
        <begin position="90"/>
        <end position="92"/>
    </location>
</feature>
<feature type="strand" evidence="5">
    <location>
        <begin position="94"/>
        <end position="99"/>
    </location>
</feature>
<feature type="helix" evidence="5">
    <location>
        <begin position="100"/>
        <end position="105"/>
    </location>
</feature>
<feature type="helix" evidence="5">
    <location>
        <begin position="106"/>
        <end position="111"/>
    </location>
</feature>
<feature type="strand" evidence="5">
    <location>
        <begin position="115"/>
        <end position="119"/>
    </location>
</feature>
<feature type="turn" evidence="5">
    <location>
        <begin position="129"/>
        <end position="131"/>
    </location>
</feature>
<feature type="helix" evidence="5">
    <location>
        <begin position="134"/>
        <end position="150"/>
    </location>
</feature>
<feature type="helix" evidence="5">
    <location>
        <begin position="153"/>
        <end position="169"/>
    </location>
</feature>
<feature type="helix" evidence="5">
    <location>
        <begin position="175"/>
        <end position="177"/>
    </location>
</feature>
<feature type="strand" evidence="5">
    <location>
        <begin position="180"/>
        <end position="183"/>
    </location>
</feature>
<feature type="helix" evidence="5">
    <location>
        <begin position="185"/>
        <end position="190"/>
    </location>
</feature>
<feature type="helix" evidence="5">
    <location>
        <begin position="197"/>
        <end position="222"/>
    </location>
</feature>
<feature type="helix" evidence="5">
    <location>
        <begin position="227"/>
        <end position="257"/>
    </location>
</feature>
<organism>
    <name type="scientific">Methanopyrus kandleri (strain AV19 / DSM 6324 / JCM 9639 / NBRC 100938)</name>
    <dbReference type="NCBI Taxonomy" id="190192"/>
    <lineage>
        <taxon>Archaea</taxon>
        <taxon>Methanobacteriati</taxon>
        <taxon>Methanobacteriota</taxon>
        <taxon>Methanomada group</taxon>
        <taxon>Methanopyri</taxon>
        <taxon>Methanopyrales</taxon>
        <taxon>Methanopyraceae</taxon>
        <taxon>Methanopyrus</taxon>
    </lineage>
</organism>
<comment type="function">
    <text evidence="3">Catalyzes the reversible reduction of methenyl-H(4)MPT(+) to methylene-H(4)MPT.</text>
</comment>
<comment type="catalytic activity">
    <reaction>
        <text>5,10-methylenetetrahydromethanopterin + oxidized coenzyme F420-(gamma-L-Glu)(n) + 2 H(+) = 5,10-methenyl-5,6,7,8-tetrahydromethanopterin + reduced coenzyme F420-(gamma-L-Glu)(n)</text>
        <dbReference type="Rhea" id="RHEA:16721"/>
        <dbReference type="Rhea" id="RHEA-COMP:12939"/>
        <dbReference type="Rhea" id="RHEA-COMP:14378"/>
        <dbReference type="ChEBI" id="CHEBI:15378"/>
        <dbReference type="ChEBI" id="CHEBI:57818"/>
        <dbReference type="ChEBI" id="CHEBI:58337"/>
        <dbReference type="ChEBI" id="CHEBI:133980"/>
        <dbReference type="ChEBI" id="CHEBI:139511"/>
        <dbReference type="EC" id="1.5.98.1"/>
    </reaction>
</comment>
<comment type="activity regulation">
    <text>Strictly dependent on the presence of salts for activity.</text>
</comment>
<comment type="biophysicochemical properties">
    <temperatureDependence>
        <text>Optimum temperature is 75 degrees Celsius.</text>
    </temperatureDependence>
</comment>
<comment type="pathway">
    <text>One-carbon metabolism; methanogenesis from CO(2); 5,10-methylene-5,6,7,8-tetrahydromethanopterin from 5,10-methenyl-5,6,7,8-tetrahydromethanopterin (coenzyme F420 route): step 1/1.</text>
</comment>
<comment type="subunit">
    <text>Homohexamer composed of a trimer of dimers.</text>
</comment>
<comment type="similarity">
    <text evidence="4">Belongs to the MTD family.</text>
</comment>
<name>MTD_METKA</name>
<dbReference type="EC" id="1.5.98.1"/>
<dbReference type="EMBL" id="Y10251">
    <property type="protein sequence ID" value="CAA71298.1"/>
    <property type="molecule type" value="Genomic_DNA"/>
</dbReference>
<dbReference type="EMBL" id="AE009439">
    <property type="protein sequence ID" value="AAM01228.1"/>
    <property type="molecule type" value="Genomic_DNA"/>
</dbReference>
<dbReference type="RefSeq" id="WP_011018383.1">
    <property type="nucleotide sequence ID" value="NC_003551.1"/>
</dbReference>
<dbReference type="PDB" id="1QV9">
    <property type="method" value="X-ray"/>
    <property type="resolution" value="1.54 A"/>
    <property type="chains" value="A/B/C=1-283"/>
</dbReference>
<dbReference type="PDB" id="1U6I">
    <property type="method" value="X-ray"/>
    <property type="resolution" value="2.20 A"/>
    <property type="chains" value="A/B/C/D/E/F/G/H/I/J/K/L=1-283"/>
</dbReference>
<dbReference type="PDB" id="1U6J">
    <property type="method" value="X-ray"/>
    <property type="resolution" value="2.40 A"/>
    <property type="chains" value="A/B/C/D/E/F/G/H/I/J/K/L=1-283"/>
</dbReference>
<dbReference type="PDB" id="1U6K">
    <property type="method" value="X-ray"/>
    <property type="resolution" value="1.55 A"/>
    <property type="chains" value="A/B/C=1-283"/>
</dbReference>
<dbReference type="PDB" id="3IQE">
    <property type="method" value="X-ray"/>
    <property type="resolution" value="1.80 A"/>
    <property type="chains" value="A/B/C/D/E/F=1-283"/>
</dbReference>
<dbReference type="PDB" id="3IQF">
    <property type="method" value="X-ray"/>
    <property type="resolution" value="2.10 A"/>
    <property type="chains" value="A/B/C/D/E/F/G/H/I/J/K/L=1-283"/>
</dbReference>
<dbReference type="PDB" id="3IQZ">
    <property type="method" value="X-ray"/>
    <property type="resolution" value="2.10 A"/>
    <property type="chains" value="A/B/C/D/E/F=1-283"/>
</dbReference>
<dbReference type="PDBsum" id="1QV9"/>
<dbReference type="PDBsum" id="1U6I"/>
<dbReference type="PDBsum" id="1U6J"/>
<dbReference type="PDBsum" id="1U6K"/>
<dbReference type="PDBsum" id="3IQE"/>
<dbReference type="PDBsum" id="3IQF"/>
<dbReference type="PDBsum" id="3IQZ"/>
<dbReference type="SMR" id="P94951"/>
<dbReference type="FunCoup" id="P94951">
    <property type="interactions" value="65"/>
</dbReference>
<dbReference type="STRING" id="190192.MK0011"/>
<dbReference type="PaxDb" id="190192-MK0011"/>
<dbReference type="EnsemblBacteria" id="AAM01228">
    <property type="protein sequence ID" value="AAM01228"/>
    <property type="gene ID" value="MK0011"/>
</dbReference>
<dbReference type="GeneID" id="1477313"/>
<dbReference type="KEGG" id="mka:MK0011"/>
<dbReference type="PATRIC" id="fig|190192.8.peg.10"/>
<dbReference type="HOGENOM" id="CLU_1006890_0_0_2"/>
<dbReference type="InParanoid" id="P94951"/>
<dbReference type="OrthoDB" id="49844at2157"/>
<dbReference type="BRENDA" id="1.5.98.1">
    <property type="organism ID" value="3274"/>
</dbReference>
<dbReference type="UniPathway" id="UPA00640">
    <property type="reaction ID" value="UER00695"/>
</dbReference>
<dbReference type="EvolutionaryTrace" id="P94951"/>
<dbReference type="Proteomes" id="UP000001826">
    <property type="component" value="Chromosome"/>
</dbReference>
<dbReference type="GO" id="GO:0008901">
    <property type="term" value="F:ferredoxin hydrogenase activity"/>
    <property type="evidence" value="ECO:0007669"/>
    <property type="project" value="InterPro"/>
</dbReference>
<dbReference type="GO" id="GO:0030268">
    <property type="term" value="F:methylenetetrahydromethanopterin dehydrogenase activity"/>
    <property type="evidence" value="ECO:0007669"/>
    <property type="project" value="UniProtKB-UniRule"/>
</dbReference>
<dbReference type="GO" id="GO:0019386">
    <property type="term" value="P:methanogenesis, from carbon dioxide"/>
    <property type="evidence" value="ECO:0007669"/>
    <property type="project" value="UniProtKB-UniRule"/>
</dbReference>
<dbReference type="GO" id="GO:0006730">
    <property type="term" value="P:one-carbon metabolic process"/>
    <property type="evidence" value="ECO:0007669"/>
    <property type="project" value="UniProtKB-UniRule"/>
</dbReference>
<dbReference type="Gene3D" id="6.10.140.120">
    <property type="match status" value="1"/>
</dbReference>
<dbReference type="Gene3D" id="3.40.50.10830">
    <property type="entry name" value="F420-dependent methylenetetrahydromethanopterin dehydrogenase (MTD)"/>
    <property type="match status" value="1"/>
</dbReference>
<dbReference type="HAMAP" id="MF_00058">
    <property type="entry name" value="MTD"/>
    <property type="match status" value="1"/>
</dbReference>
<dbReference type="InterPro" id="IPR002844">
    <property type="entry name" value="MTD"/>
</dbReference>
<dbReference type="InterPro" id="IPR036080">
    <property type="entry name" value="MTD_sf"/>
</dbReference>
<dbReference type="NCBIfam" id="NF002162">
    <property type="entry name" value="PRK00994.1"/>
    <property type="match status" value="1"/>
</dbReference>
<dbReference type="Pfam" id="PF01993">
    <property type="entry name" value="MTD"/>
    <property type="match status" value="1"/>
</dbReference>
<dbReference type="PIRSF" id="PIRSF005627">
    <property type="entry name" value="MTD"/>
    <property type="match status" value="1"/>
</dbReference>
<dbReference type="SUPFAM" id="SSF102324">
    <property type="entry name" value="F420-dependent methylenetetrahydromethanopterin dehydrogenase (MTD)"/>
    <property type="match status" value="1"/>
</dbReference>
<accession>P94951</accession>
<accession>Q9UWL4</accession>
<reference key="1">
    <citation type="journal article" date="1997" name="Eur. J. Biochem.">
        <title>Overexpression of the coenzyme-F420-dependent N5,N10-methylenetetrahydromethanopterin dehydrogenase gene from the hyperthermophilic Methanopyrus kandleri.</title>
        <authorList>
            <person name="Klein A.R."/>
            <person name="Thauer R.K."/>
        </authorList>
    </citation>
    <scope>NUCLEOTIDE SEQUENCE [GENOMIC DNA]</scope>
    <scope>FUNCTION</scope>
</reference>
<reference key="2">
    <citation type="journal article" date="2002" name="Proc. Natl. Acad. Sci. U.S.A.">
        <title>The complete genome of hyperthermophile Methanopyrus kandleri AV19 and monophyly of archaeal methanogens.</title>
        <authorList>
            <person name="Slesarev A.I."/>
            <person name="Mezhevaya K.V."/>
            <person name="Makarova K.S."/>
            <person name="Polushin N.N."/>
            <person name="Shcherbinina O.V."/>
            <person name="Shakhova V.V."/>
            <person name="Belova G.I."/>
            <person name="Aravind L."/>
            <person name="Natale D.A."/>
            <person name="Rogozin I.B."/>
            <person name="Tatusov R.L."/>
            <person name="Wolf Y.I."/>
            <person name="Stetter K.O."/>
            <person name="Malykh A.G."/>
            <person name="Koonin E.V."/>
            <person name="Kozyavkin S.A."/>
        </authorList>
    </citation>
    <scope>NUCLEOTIDE SEQUENCE [LARGE SCALE GENOMIC DNA]</scope>
    <source>
        <strain>AV19 / DSM 6324 / JCM 9639 / NBRC 100938</strain>
    </source>
</reference>
<reference key="3">
    <citation type="journal article" date="1993" name="Arch. Microbiol.">
        <title>Two N5,N10-methylenetetrahydromethanopterin dehydrogenases in the extreme thermophile Methanopyrus kandleri: characterization of the coenzyme F420-dependent enzyme.</title>
        <authorList>
            <person name="Klein A.R."/>
            <person name="Koch J."/>
            <person name="Stetter K.O."/>
            <person name="Thauer R.K."/>
        </authorList>
    </citation>
    <scope>PROTEIN SEQUENCE OF 2-35</scope>
    <scope>CHARACTERIZATION</scope>
    <source>
        <strain>AV19 / DSM 6324 / JCM 9639 / NBRC 100938</strain>
    </source>
</reference>
<reference key="4">
    <citation type="journal article" date="2003" name="Acta Crystallogr. D">
        <title>Coenzyme F420-dependent methylenetetrahydromethanopterin dehydrogenase from Methanopyrus kandleri: the selenomethionine-labelled and non-labelled enzyme crystallized in two different forms.</title>
        <authorList>
            <person name="Hagemeier C.H."/>
            <person name="Shima S."/>
            <person name="Warkentin E."/>
            <person name="Thauer R.K."/>
            <person name="Ermler U."/>
        </authorList>
    </citation>
    <scope>CRYSTALLIZATION</scope>
</reference>
<reference key="5">
    <citation type="journal article" date="2003" name="J. Mol. Biol.">
        <title>Coenzyme F420-dependent methylenetetrahydromethanopterin dehydrogenase (Mtd) from Methanopyrus kandleri: a methanogenic enzyme with an unusual quarternary structure.</title>
        <authorList>
            <person name="Hagemeier C.H."/>
            <person name="Shima S."/>
            <person name="Thauer R.K."/>
            <person name="Bourenkov G."/>
            <person name="Bartunik H.D."/>
            <person name="Ermler U."/>
        </authorList>
    </citation>
    <scope>X-RAY CRYSTALLOGRAPHY (1.54 ANGSTROMS)</scope>
</reference>
<proteinExistence type="evidence at protein level"/>
<keyword id="KW-0002">3D-structure</keyword>
<keyword id="KW-0903">Direct protein sequencing</keyword>
<keyword id="KW-0484">Methanogenesis</keyword>
<keyword id="KW-0554">One-carbon metabolism</keyword>
<keyword id="KW-0560">Oxidoreductase</keyword>
<keyword id="KW-1185">Reference proteome</keyword>
<sequence length="283" mass="31382">MTVAKAIFIKCGNLGTSMMMDMLLDERADREDVEFRVVGTSVKMDPECVEAAVEMALDIAEDFEPDFIVYGGPNPAAPGPSKAREMLADSEYPAVIIGDAPGLKVKDEMEEQGLGYILVKPDAMLGARREFLDPVEMAIYNADLMKVLAATGVFRVVQEAFDELIEKAKEDEISENDLPKLVIDRNTLLEREEFENPYAMVKAMAALEIAENVADVSVEGCFVEQDKERYVPIVASAHEMMRKAAELADEARELEKSNDAVLRTPHAPDGKVLSKRKFMEDPE</sequence>
<gene>
    <name type="primary">mtd</name>
    <name type="ordered locus">MK0011</name>
</gene>
<evidence type="ECO:0000256" key="1">
    <source>
        <dbReference type="SAM" id="MobiDB-lite"/>
    </source>
</evidence>
<evidence type="ECO:0000269" key="2">
    <source>
    </source>
</evidence>
<evidence type="ECO:0000269" key="3">
    <source>
    </source>
</evidence>
<evidence type="ECO:0000305" key="4"/>
<evidence type="ECO:0007829" key="5">
    <source>
        <dbReference type="PDB" id="1QV9"/>
    </source>
</evidence>
<protein>
    <recommendedName>
        <fullName>F420-dependent methylenetetrahydromethanopterin dehydrogenase</fullName>
        <shortName>MTD</shortName>
        <ecNumber>1.5.98.1</ecNumber>
    </recommendedName>
    <alternativeName>
        <fullName>Coenzyme F420-dependent N5,N10-methylenetetrahydromethanopterin dehydrogenase</fullName>
    </alternativeName>
</protein>